<reference key="1">
    <citation type="journal article" date="1994" name="Virology">
        <title>Genome structure and variability of a virus causing hantavirus pulmonary syndrome.</title>
        <authorList>
            <person name="Spiropoulou C.F."/>
            <person name="Morzunov S."/>
            <person name="Feldmann H."/>
            <person name="Sanchez A."/>
            <person name="Peters C.J."/>
            <person name="Nichol S.T."/>
        </authorList>
    </citation>
    <scope>NUCLEOTIDE SEQUENCE [GENOMIC RNA]</scope>
    <source>
        <strain evidence="11">NM H10</strain>
    </source>
</reference>
<reference key="2">
    <citation type="journal article" date="1995" name="J. Virol.">
        <title>Complete genetic characterization and analysis of isolation of Sin Nombre virus.</title>
        <authorList>
            <person name="Chizhikov V.E."/>
            <person name="Spiropoulou C.F."/>
            <person name="Morzunov S.P."/>
            <person name="Monroe M.C."/>
            <person name="Peters C.J."/>
            <person name="Nichol S.T."/>
        </authorList>
    </citation>
    <scope>NUCLEOTIDE SEQUENCE [GENOMIC RNA]</scope>
</reference>
<reference key="3">
    <citation type="journal article" date="2014" name="Proc. Natl. Acad. Sci. U.S.A.">
        <title>Pathophysiology of hantavirus pulmonary syndrome in rhesus macaques.</title>
        <authorList>
            <person name="Safronetz D."/>
            <person name="Prescott J."/>
            <person name="Feldmann F."/>
            <person name="Haddock E."/>
            <person name="Rosenke R."/>
            <person name="Okumura A."/>
            <person name="Brining D."/>
            <person name="Dahlstrom E."/>
            <person name="Porcella S.F."/>
            <person name="Ebihara H."/>
            <person name="Scott D.P."/>
            <person name="Hjelle B."/>
            <person name="Feldmann H."/>
        </authorList>
    </citation>
    <scope>NUCLEOTIDE SEQUENCE [GENOMIC RNA]</scope>
    <source>
        <strain evidence="12">77734</strain>
    </source>
</reference>
<reference key="4">
    <citation type="journal article" date="2005" name="J. Virol.">
        <title>Peptide antagonists that inhibit Sin Nombre virus and hantaan virus entry through the beta3-integrin receptor.</title>
        <authorList>
            <person name="Larson R.S."/>
            <person name="Brown D.C."/>
            <person name="Ye C."/>
            <person name="Hjelle B."/>
        </authorList>
    </citation>
    <scope>FUNCTION (GLYCOPROTEIN N)</scope>
    <scope>FUNCTION (GLYCOPROTEIN C)</scope>
</reference>
<reference key="5">
    <citation type="journal article" date="2014" name="Viruses">
        <title>Hantavirus Gn and Gc envelope glycoproteins: key structural units for virus cell entry and virus assembly.</title>
        <authorList>
            <person name="Cifuentes-Munoz N."/>
            <person name="Salazar-Quiroz N."/>
            <person name="Tischler N.D."/>
        </authorList>
    </citation>
    <scope>REVIEW</scope>
</reference>
<feature type="signal peptide" evidence="6">
    <location>
        <begin position="1"/>
        <end position="17"/>
    </location>
</feature>
<feature type="chain" id="PRO_0000455197" description="Envelopment polyprotein">
    <location>
        <begin position="18"/>
        <end position="1140"/>
    </location>
</feature>
<feature type="chain" id="PRO_0000455198" description="Glycoprotein N">
    <location>
        <begin position="18"/>
        <end position="652"/>
    </location>
</feature>
<feature type="chain" id="PRO_0000455199" description="Glycoprotein C">
    <location>
        <begin position="653"/>
        <end position="1140"/>
    </location>
</feature>
<feature type="topological domain" description="Lumenal" evidence="6">
    <location>
        <begin position="18"/>
        <end position="480"/>
    </location>
</feature>
<feature type="transmembrane region" description="Helical" evidence="6">
    <location>
        <begin position="490"/>
        <end position="510"/>
    </location>
</feature>
<feature type="topological domain" description="Cytoplasmic" evidence="6">
    <location>
        <begin position="511"/>
        <end position="631"/>
    </location>
</feature>
<feature type="transmembrane region" description="Helical" evidence="6">
    <location>
        <begin position="632"/>
        <end position="652"/>
    </location>
</feature>
<feature type="topological domain" description="Lumenal" evidence="6">
    <location>
        <begin position="653"/>
        <end position="1108"/>
    </location>
</feature>
<feature type="transmembrane region" description="Helical" evidence="6">
    <location>
        <begin position="1109"/>
        <end position="1129"/>
    </location>
</feature>
<feature type="topological domain" description="Cytoplasmic" evidence="6">
    <location>
        <begin position="1130"/>
        <end position="1140"/>
    </location>
</feature>
<feature type="domain" description="ITAM" evidence="7">
    <location>
        <begin position="615"/>
        <end position="638"/>
    </location>
</feature>
<feature type="zinc finger region" description="CCHC-type 1" evidence="5">
    <location>
        <begin position="549"/>
        <end position="569"/>
    </location>
</feature>
<feature type="zinc finger region" description="CCHC-type 2" evidence="5">
    <location>
        <begin position="574"/>
        <end position="595"/>
    </location>
</feature>
<feature type="region of interest" description="Binding to the ribonucleoprotein" evidence="5">
    <location>
        <begin position="520"/>
        <end position="537"/>
    </location>
</feature>
<feature type="region of interest" description="Binding to the ribonucleoprotein" evidence="3">
    <location>
        <begin position="592"/>
        <end position="609"/>
    </location>
</feature>
<feature type="region of interest" description="Binding to the ribonucleoprotein" evidence="5">
    <location>
        <begin position="596"/>
        <end position="607"/>
    </location>
</feature>
<feature type="region of interest" description="Binding to the ribonucleoprotein" evidence="3">
    <location>
        <begin position="615"/>
        <end position="629"/>
    </location>
</feature>
<feature type="region of interest" description="Fusion loop" evidence="4">
    <location>
        <begin position="761"/>
        <end position="781"/>
    </location>
</feature>
<feature type="region of interest" description="Binding to the ribonucleoprotein" evidence="3">
    <location>
        <begin position="1125"/>
        <end position="1140"/>
    </location>
</feature>
<feature type="short sequence motif" description="YxxL" evidence="1">
    <location>
        <begin position="619"/>
        <end position="622"/>
    </location>
</feature>
<feature type="site" description="Cleavage; by host signal peptidase" evidence="1">
    <location>
        <begin position="652"/>
        <end position="653"/>
    </location>
</feature>
<feature type="modified residue" description="Phosphotyrosine" evidence="7">
    <location>
        <position position="619"/>
    </location>
</feature>
<feature type="modified residue" description="Phosphotyrosine" evidence="7">
    <location>
        <position position="632"/>
    </location>
</feature>
<feature type="glycosylation site" description="N-linked (GlcNAc...) asparagine; by host" evidence="6">
    <location>
        <position position="138"/>
    </location>
</feature>
<feature type="glycosylation site" description="N-linked (GlcNAc...) asparagine; by host" evidence="6">
    <location>
        <position position="351"/>
    </location>
</feature>
<feature type="glycosylation site" description="N-linked (GlcNAc...) asparagine; by host" evidence="6">
    <location>
        <position position="403"/>
    </location>
</feature>
<feature type="glycosylation site" description="N-linked (GlcNAc...) asparagine; by host" evidence="1">
    <location>
        <position position="931"/>
    </location>
</feature>
<feature type="disulfide bond" evidence="5">
    <location>
        <begin position="30"/>
        <end position="155"/>
    </location>
</feature>
<feature type="disulfide bond" evidence="5">
    <location>
        <begin position="64"/>
        <end position="161"/>
    </location>
</feature>
<feature type="disulfide bond" evidence="5">
    <location>
        <begin position="113"/>
        <end position="132"/>
    </location>
</feature>
<feature type="disulfide bond" evidence="5">
    <location>
        <begin position="137"/>
        <end position="142"/>
    </location>
</feature>
<feature type="disulfide bond" evidence="5">
    <location>
        <begin position="179"/>
        <end position="189"/>
    </location>
</feature>
<feature type="disulfide bond" evidence="5">
    <location>
        <begin position="214"/>
        <end position="251"/>
    </location>
</feature>
<feature type="disulfide bond" evidence="5">
    <location>
        <begin position="380"/>
        <end position="439"/>
    </location>
</feature>
<feature type="disulfide bond" evidence="5">
    <location>
        <begin position="384"/>
        <end position="393"/>
    </location>
</feature>
<feature type="disulfide bond" evidence="5">
    <location>
        <begin position="409"/>
        <end position="428"/>
    </location>
</feature>
<feature type="disulfide bond" evidence="5">
    <location>
        <begin position="456"/>
        <end position="479"/>
    </location>
</feature>
<feature type="disulfide bond" evidence="1">
    <location>
        <begin position="739"/>
        <end position="774"/>
    </location>
</feature>
<feature type="disulfide bond" evidence="1">
    <location>
        <begin position="743"/>
        <end position="781"/>
    </location>
</feature>
<feature type="disulfide bond" evidence="1">
    <location>
        <begin position="755"/>
        <end position="888"/>
    </location>
</feature>
<feature type="disulfide bond" evidence="1">
    <location>
        <begin position="769"/>
        <end position="899"/>
    </location>
</feature>
<feature type="disulfide bond" evidence="1">
    <location>
        <begin position="784"/>
        <end position="907"/>
    </location>
</feature>
<feature type="disulfide bond" evidence="1">
    <location>
        <begin position="810"/>
        <end position="819"/>
    </location>
</feature>
<feature type="disulfide bond" evidence="1">
    <location>
        <begin position="827"/>
        <end position="836"/>
    </location>
</feature>
<feature type="disulfide bond" evidence="1">
    <location>
        <begin position="867"/>
        <end position="871"/>
    </location>
</feature>
<feature type="disulfide bond" evidence="1">
    <location>
        <begin position="973"/>
        <end position="1003"/>
    </location>
</feature>
<feature type="disulfide bond" evidence="1">
    <location>
        <begin position="996"/>
        <end position="1048"/>
    </location>
</feature>
<feature type="disulfide bond" evidence="1">
    <location>
        <begin position="1013"/>
        <end position="1018"/>
    </location>
</feature>
<feature type="disulfide bond" evidence="1">
    <location>
        <begin position="1049"/>
        <end position="1054"/>
    </location>
</feature>
<feature type="disulfide bond" evidence="5">
    <location>
        <begin position="1088"/>
        <end position="1092"/>
    </location>
</feature>
<feature type="sequence variant" description="In strain: 77734." evidence="8">
    <original>I</original>
    <variation>T</variation>
    <location>
        <position position="47"/>
    </location>
</feature>
<feature type="sequence variant" description="In strain: 77734." evidence="8">
    <original>I</original>
    <variation>V</variation>
    <location>
        <position position="107"/>
    </location>
</feature>
<feature type="sequence variant" description="In strain: 77734." evidence="8">
    <original>V</original>
    <variation>I</variation>
    <location>
        <position position="302"/>
    </location>
</feature>
<feature type="sequence variant" description="In strain: 77734." evidence="8">
    <original>H</original>
    <variation>R</variation>
    <location>
        <position position="472"/>
    </location>
</feature>
<feature type="sequence variant" description="In strain: 77734." evidence="8">
    <original>A</original>
    <variation>T</variation>
    <location>
        <position position="504"/>
    </location>
</feature>
<feature type="sequence variant" description="In strain: 77734." evidence="8">
    <original>I</original>
    <variation>V</variation>
    <location>
        <position position="1120"/>
    </location>
</feature>
<feature type="sequence conflict" description="In Ref. 3; AIA08876/AIA08879." evidence="9" ref="3">
    <original>N</original>
    <variation>KKKY</variation>
    <location>
        <position position="1140"/>
    </location>
</feature>
<keyword id="KW-1072">Activation of host autophagy by virus</keyword>
<keyword id="KW-1015">Disulfide bond</keyword>
<keyword id="KW-1170">Fusion of virus membrane with host endosomal membrane</keyword>
<keyword id="KW-1168">Fusion of virus membrane with host membrane</keyword>
<keyword id="KW-0325">Glycoprotein</keyword>
<keyword id="KW-1038">Host endoplasmic reticulum</keyword>
<keyword id="KW-1040">Host Golgi apparatus</keyword>
<keyword id="KW-1043">Host membrane</keyword>
<keyword id="KW-1045">Host mitochondrion</keyword>
<keyword id="KW-0945">Host-virus interaction</keyword>
<keyword id="KW-1090">Inhibition of host innate immune response by virus</keyword>
<keyword id="KW-1097">Inhibition of host MAVS by virus</keyword>
<keyword id="KW-1113">Inhibition of host RLR pathway by virus</keyword>
<keyword id="KW-1110">Inhibition of host TRAFs by virus</keyword>
<keyword id="KW-0472">Membrane</keyword>
<keyword id="KW-0479">Metal-binding</keyword>
<keyword id="KW-0597">Phosphoprotein</keyword>
<keyword id="KW-0677">Repeat</keyword>
<keyword id="KW-0732">Signal</keyword>
<keyword id="KW-0812">Transmembrane</keyword>
<keyword id="KW-1133">Transmembrane helix</keyword>
<keyword id="KW-1161">Viral attachment to host cell</keyword>
<keyword id="KW-0261">Viral envelope protein</keyword>
<keyword id="KW-0899">Viral immunoevasion</keyword>
<keyword id="KW-1162">Viral penetration into host cytoplasm</keyword>
<keyword id="KW-0946">Virion</keyword>
<keyword id="KW-1164">Virus endocytosis by host</keyword>
<keyword id="KW-1160">Virus entry into host cell</keyword>
<keyword id="KW-0862">Zinc</keyword>
<keyword id="KW-0863">Zinc-finger</keyword>
<organism>
    <name type="scientific">Sin Nombre orthohantavirus</name>
    <name type="common">SNV</name>
    <name type="synonym">Sin Nombre virus</name>
    <dbReference type="NCBI Taxonomy" id="3052499"/>
    <lineage>
        <taxon>Viruses</taxon>
        <taxon>Riboviria</taxon>
        <taxon>Orthornavirae</taxon>
        <taxon>Negarnaviricota</taxon>
        <taxon>Polyploviricotina</taxon>
        <taxon>Ellioviricetes</taxon>
        <taxon>Bunyavirales</taxon>
        <taxon>Hantaviridae</taxon>
        <taxon>Mammantavirinae</taxon>
        <taxon>Orthohantavirus</taxon>
    </lineage>
</organism>
<organismHost>
    <name type="scientific">Homo sapiens</name>
    <name type="common">Human</name>
    <dbReference type="NCBI Taxonomy" id="9606"/>
</organismHost>
<organismHost>
    <name type="scientific">Peromyscus maniculatus</name>
    <name type="common">North American deer mouse</name>
    <dbReference type="NCBI Taxonomy" id="10042"/>
</organismHost>
<gene>
    <name type="primary">GP</name>
</gene>
<comment type="function">
    <molecule>Glycoprotein N</molecule>
    <text evidence="1 3 10">Forms homotetramers with glycoprotein C at the surface of the virion (By similarity). Attaches the virion to host cell receptors including integrin ITGAV/ITGB3 (Probable). This attachment induces virion internalization predominantly through clathrin-dependent endocytosis (By similarity). Mediates the assembly and budding of infectious virus particles through its interaction with the nucleocapsid protein and the viral genome (By similarity). May dysregulate normal immune and endothelial cell responses through an ITAM motif (By similarity). Translocates to mitochondria, binds to host TUFM and recruits MAP1LC3B (By similarity). These interactions induce mitochondrial autophagy and therefore destruction of host MAVS leading to inhibition of type I interferon (IFN) responses (By similarity). Concomitant breakdown of glycoprotein N is apparently prevented by the nucleoprotein that may inhibit Gn-stimulated autophagosome-lysosome fusion (By similarity). Interacts with the viral genomic RNA (By similarity).</text>
</comment>
<comment type="function">
    <molecule>Glycoprotein C</molecule>
    <text evidence="1 10">Forms homotetramers with glycoprotein N at the surface of the virion (By similarity). Attaches the virion to host cell receptors including integrin ITGAV/ITGB3 (Probable). This attachment induces virion internalization predominantly through clathrin-dependent endocytosis (By similarity). Class II fusion protein that promotes fusion of viral membrane with host endosomal membrane after endocytosis of the virion (By similarity).</text>
</comment>
<comment type="subunit">
    <molecule>Glycoprotein N</molecule>
    <text evidence="1 2">Homodimer (By similarity). Homotetramer; forms heterotetrameric Gn-Gc spikes in the pre-fusion conformation (By similarity). Interacts (via C-terminus) with the nucleoprotein (By similarity). Interacts with host TUFM; this interaction contributes to the virus-induced degradation of mitochondria by autophagy, which leads to degradation of host MAVS and inhibition of type I interferon (IFN) responses (By similarity). Interacts with host MAP1LC3B; this interaction contributes to the virus-induced degradation of mitochondria by autophagy, which leads to degradation of host MAVS and inhibition of type I interferon (IFN) responses (By similarity).</text>
</comment>
<comment type="subunit">
    <molecule>Glycoprotein C</molecule>
    <text evidence="1 3">Homodimer. Homotetramer; forms heterotetrameric Gn-Gc spikes in the pre-fusion conformation. Homotrimer; forms homotrimer in the post-fusion conformation at acidic pH (By similarity). Interacts (via C-terminus) with the nucleoprotein (By similarity).</text>
</comment>
<comment type="subcellular location">
    <molecule>Glycoprotein N</molecule>
    <subcellularLocation>
        <location evidence="1">Virion membrane</location>
        <topology evidence="9">Multi-pass membrane protein</topology>
    </subcellularLocation>
    <subcellularLocation>
        <location evidence="1">Host cell surface</location>
    </subcellularLocation>
    <subcellularLocation>
        <location evidence="1">Host Golgi apparatus membrane</location>
        <topology evidence="1">Multi-pass membrane protein</topology>
    </subcellularLocation>
    <subcellularLocation>
        <location evidence="1">Host endoplasmic reticulum membrane</location>
        <topology evidence="1">Multi-pass membrane protein</topology>
    </subcellularLocation>
    <subcellularLocation>
        <location evidence="1">Host mitochondrion</location>
    </subcellularLocation>
    <text evidence="1">Interaction between glycoprotein N and glycoprotein C is essential for proper targeting of glycoprotein N to the host plasma membrane complex, where virion budding occurs.</text>
</comment>
<comment type="subcellular location">
    <molecule>Glycoprotein C</molecule>
    <subcellularLocation>
        <location evidence="1">Virion membrane</location>
        <topology>Single-pass type I membrane protein</topology>
    </subcellularLocation>
    <subcellularLocation>
        <location evidence="1">Host cell surface</location>
    </subcellularLocation>
    <subcellularLocation>
        <location evidence="1">Host Golgi apparatus membrane</location>
        <topology evidence="1">Single-pass type I membrane protein</topology>
    </subcellularLocation>
    <subcellularLocation>
        <location evidence="1">Host endoplasmic reticulum membrane</location>
        <topology evidence="1">Single-pass type I membrane protein</topology>
    </subcellularLocation>
    <text evidence="1 9">Budding probably takes place at the host plasma membrane (Probable). Glycoprotein C cytoplasmic tail is important for efficient Golgi localization (By similarity).</text>
</comment>
<comment type="domain">
    <molecule>Glycoprotein N</molecule>
    <text evidence="1 2 3 5">The YxxL motif at the C-terminus is indispensable for the interaction with MAP1LC3B and for the Gn-mediated induction of mitochondrial autophagy (By similarity). The cytoplasmic tail is involved in the inhibition of the host innate immune response (By similarity). The C-terminus of the cytoplasmic tail is involved in binding to the viral genome and the nucleocapsid (By similarity). Contains 2 contiguous zinc-fingers (By similarity).</text>
</comment>
<comment type="domain">
    <molecule>Glycoprotein C</molecule>
    <text evidence="3">The C-terminus is necessary for proper localization in the Golgi (By similarity). The cytoplasmic tail is involved in binding to the nucleocapsid (By similarity).</text>
</comment>
<comment type="PTM">
    <molecule>Envelopment polyprotein</molecule>
    <text evidence="1">Envelope polyprotein precursor is quickly cleaved in vivo just after synthesis, presumably by host signal peptidase.</text>
</comment>
<comment type="similarity">
    <text evidence="9">Belongs to the hantavirus envelope glycoprotein family.</text>
</comment>
<evidence type="ECO:0000250" key="1">
    <source>
        <dbReference type="UniProtKB" id="P08668"/>
    </source>
</evidence>
<evidence type="ECO:0000250" key="2">
    <source>
        <dbReference type="UniProtKB" id="P0DTJ1"/>
    </source>
</evidence>
<evidence type="ECO:0000250" key="3">
    <source>
        <dbReference type="UniProtKB" id="P27312"/>
    </source>
</evidence>
<evidence type="ECO:0000250" key="4">
    <source>
        <dbReference type="UniProtKB" id="P41266"/>
    </source>
</evidence>
<evidence type="ECO:0000250" key="5">
    <source>
        <dbReference type="UniProtKB" id="Q9E006"/>
    </source>
</evidence>
<evidence type="ECO:0000255" key="6"/>
<evidence type="ECO:0000255" key="7">
    <source>
        <dbReference type="PROSITE-ProRule" id="PRU00379"/>
    </source>
</evidence>
<evidence type="ECO:0000269" key="8">
    <source>
    </source>
</evidence>
<evidence type="ECO:0000305" key="9"/>
<evidence type="ECO:0000305" key="10">
    <source>
    </source>
</evidence>
<evidence type="ECO:0000312" key="11">
    <source>
        <dbReference type="EMBL" id="AAA75530.1"/>
    </source>
</evidence>
<evidence type="ECO:0000312" key="12">
    <source>
        <dbReference type="EMBL" id="AIA08876.1"/>
    </source>
</evidence>
<protein>
    <recommendedName>
        <fullName>Envelopment polyprotein</fullName>
    </recommendedName>
    <alternativeName>
        <fullName>M polyprotein</fullName>
    </alternativeName>
    <component>
        <recommendedName>
            <fullName evidence="1">Glycoprotein N</fullName>
            <shortName>Gn</shortName>
        </recommendedName>
        <alternativeName>
            <fullName>Glycoprotein G1</fullName>
        </alternativeName>
    </component>
    <component>
        <recommendedName>
            <fullName evidence="1">Glycoprotein C</fullName>
            <shortName>Gc</shortName>
        </recommendedName>
        <alternativeName>
            <fullName>Glycoprotein G2</fullName>
        </alternativeName>
    </component>
</protein>
<accession>Q89905</accession>
<accession>A0A059WG88</accession>
<dbReference type="EMBL" id="L25783">
    <property type="protein sequence ID" value="AAA75530.1"/>
    <property type="molecule type" value="Viral_cRNA"/>
</dbReference>
<dbReference type="EMBL" id="L37903">
    <property type="protein sequence ID" value="AAC42202.1"/>
    <property type="molecule type" value="Genomic_RNA"/>
</dbReference>
<dbReference type="EMBL" id="KF537002">
    <property type="protein sequence ID" value="AIA08876.1"/>
    <property type="molecule type" value="Viral_cRNA"/>
</dbReference>
<dbReference type="EMBL" id="KF537005">
    <property type="protein sequence ID" value="AIA08879.1"/>
    <property type="molecule type" value="Viral_cRNA"/>
</dbReference>
<dbReference type="SMR" id="Q89905"/>
<dbReference type="GlyCosmos" id="Q89905">
    <property type="glycosylation" value="4 sites, No reported glycans"/>
</dbReference>
<dbReference type="KEGG" id="vg:2654026"/>
<dbReference type="Proteomes" id="UP000113911">
    <property type="component" value="Genome"/>
</dbReference>
<dbReference type="Proteomes" id="UP000167429">
    <property type="component" value="Genome"/>
</dbReference>
<dbReference type="Proteomes" id="UP000204632">
    <property type="component" value="Genome"/>
</dbReference>
<dbReference type="GO" id="GO:0044167">
    <property type="term" value="C:host cell endoplasmic reticulum membrane"/>
    <property type="evidence" value="ECO:0007669"/>
    <property type="project" value="UniProtKB-SubCell"/>
</dbReference>
<dbReference type="GO" id="GO:0044178">
    <property type="term" value="C:host cell Golgi membrane"/>
    <property type="evidence" value="ECO:0007669"/>
    <property type="project" value="UniProtKB-SubCell"/>
</dbReference>
<dbReference type="GO" id="GO:0033650">
    <property type="term" value="C:host cell mitochondrion"/>
    <property type="evidence" value="ECO:0007669"/>
    <property type="project" value="UniProtKB-SubCell"/>
</dbReference>
<dbReference type="GO" id="GO:0044228">
    <property type="term" value="C:host cell surface"/>
    <property type="evidence" value="ECO:0007669"/>
    <property type="project" value="UniProtKB-SubCell"/>
</dbReference>
<dbReference type="GO" id="GO:0016020">
    <property type="term" value="C:membrane"/>
    <property type="evidence" value="ECO:0007669"/>
    <property type="project" value="UniProtKB-KW"/>
</dbReference>
<dbReference type="GO" id="GO:0019031">
    <property type="term" value="C:viral envelope"/>
    <property type="evidence" value="ECO:0007669"/>
    <property type="project" value="UniProtKB-KW"/>
</dbReference>
<dbReference type="GO" id="GO:0055036">
    <property type="term" value="C:virion membrane"/>
    <property type="evidence" value="ECO:0007669"/>
    <property type="project" value="UniProtKB-SubCell"/>
</dbReference>
<dbReference type="GO" id="GO:0008270">
    <property type="term" value="F:zinc ion binding"/>
    <property type="evidence" value="ECO:0007669"/>
    <property type="project" value="UniProtKB-KW"/>
</dbReference>
<dbReference type="GO" id="GO:0075509">
    <property type="term" value="P:endocytosis involved in viral entry into host cell"/>
    <property type="evidence" value="ECO:0007669"/>
    <property type="project" value="UniProtKB-KW"/>
</dbReference>
<dbReference type="GO" id="GO:0039654">
    <property type="term" value="P:fusion of virus membrane with host endosome membrane"/>
    <property type="evidence" value="ECO:0007669"/>
    <property type="project" value="UniProtKB-KW"/>
</dbReference>
<dbReference type="GO" id="GO:0007165">
    <property type="term" value="P:signal transduction"/>
    <property type="evidence" value="ECO:0007669"/>
    <property type="project" value="InterPro"/>
</dbReference>
<dbReference type="GO" id="GO:0039520">
    <property type="term" value="P:symbiont-mediated activation of host autophagy"/>
    <property type="evidence" value="ECO:0007669"/>
    <property type="project" value="UniProtKB-KW"/>
</dbReference>
<dbReference type="GO" id="GO:0039545">
    <property type="term" value="P:symbiont-mediated suppression of host cytoplasmic pattern recognition receptor signaling pathway via inhibition of MAVS activity"/>
    <property type="evidence" value="ECO:0007669"/>
    <property type="project" value="UniProtKB-KW"/>
</dbReference>
<dbReference type="GO" id="GO:0039527">
    <property type="term" value="P:symbiont-mediated suppression of host TRAF-mediated signal transduction"/>
    <property type="evidence" value="ECO:0007669"/>
    <property type="project" value="UniProtKB-KW"/>
</dbReference>
<dbReference type="GO" id="GO:0019062">
    <property type="term" value="P:virion attachment to host cell"/>
    <property type="evidence" value="ECO:0007669"/>
    <property type="project" value="UniProtKB-KW"/>
</dbReference>
<dbReference type="Gene3D" id="1.10.8.1320">
    <property type="match status" value="1"/>
</dbReference>
<dbReference type="InterPro" id="IPR016402">
    <property type="entry name" value="Envelope_glycoprot_Hantavirus"/>
</dbReference>
<dbReference type="InterPro" id="IPR048791">
    <property type="entry name" value="Gc_C_bunya"/>
</dbReference>
<dbReference type="InterPro" id="IPR048790">
    <property type="entry name" value="Gn-B_hanta"/>
</dbReference>
<dbReference type="InterPro" id="IPR002532">
    <property type="entry name" value="Hanta_Gc_N"/>
</dbReference>
<dbReference type="InterPro" id="IPR002534">
    <property type="entry name" value="Hanta_Gn-H"/>
</dbReference>
<dbReference type="InterPro" id="IPR012316">
    <property type="entry name" value="ITAM_motif_hantavir-typ"/>
</dbReference>
<dbReference type="Pfam" id="PF20682">
    <property type="entry name" value="Hanta_Gc_C"/>
    <property type="match status" value="1"/>
</dbReference>
<dbReference type="Pfam" id="PF01561">
    <property type="entry name" value="Hanta_Gc_N"/>
    <property type="match status" value="1"/>
</dbReference>
<dbReference type="Pfam" id="PF20679">
    <property type="entry name" value="Hanta_Gn-B"/>
    <property type="match status" value="1"/>
</dbReference>
<dbReference type="Pfam" id="PF01567">
    <property type="entry name" value="Hanta_Gn-H"/>
    <property type="match status" value="1"/>
</dbReference>
<dbReference type="Pfam" id="PF10538">
    <property type="entry name" value="ITAM_Cys-rich"/>
    <property type="match status" value="1"/>
</dbReference>
<dbReference type="PIRSF" id="PIRSF003945">
    <property type="entry name" value="M_poly_HantaV"/>
    <property type="match status" value="1"/>
</dbReference>
<dbReference type="PROSITE" id="PS51056">
    <property type="entry name" value="ITAM_2"/>
    <property type="match status" value="1"/>
</dbReference>
<name>GP_SINV</name>
<sequence length="1140" mass="125735">MVGWVCIFLVVLTTATAGLTRNLYELKIECPHTVGLGQGYVTGSVEITPILLTQVADLKIESSCNFDLHVPATTTQKYNQVDWTKKSSTTESTNAGATTFEAKTKEINLKGTCNIPPTTFEAAYKSRKTVICYDLACNQTHCLPTVHLIAPVQTCMSVRSCMIGLLSSRIQVIYEKTYCVTGQLIEGLCFIPTHTIALTQPGHTYDTMTLPVTCFLVAKKLGTQLKLAVELEKLITGVSCTENSFQGYYICFIGKHSEPLFVPTMEDYRSAELFTRMVLNPRGEDHDPDQNGQGLMRIAGPVTAKVPSTETTETMQGIAFAGAPMYSSFSTLVRKADPEYVFSPGIIAESNHSVCDKKTVPLTWTGFLAVSGEIEKITGCTVFCTLAGPGASCEAYSETGIFNISSPTCLVNKVQKFRGSEQRINFMCQRVDQDVVVYCNGQKKVILTKTLVIGQCIYTFTSLFSLIPGVAHSLAVELCVPGLHGWATTALLITFCFGWLLIPAVTLIILKILRLLTFSCSHYSTESKFKVILERVKVEYQKTMGSMVCDICHHECETAKELETHKKSCPEGQCPYCMTITESTESALQAHFAICKLTNRFQENLKKSLKRPEVRKGCYRTLGVFRYKSRCYVGLVWGILLTTELIIWAASADTPLMESGWSDTAHGVGIIPMKTDLELDFALASSSSYSYRRKLVNPANQEETLPFHFQLDKQVVHAEIQNLGHWMDGTFNIKTAFHCYGECKKYAYPWQTAKCFFEKDYQYETSWGCNPPDCPGVGTGCTACGVYLDKLRSVGKAYKIVSLKYTRKVCIQLGTEQTCKHIDVNDCLVTPSVKVCMIGTISKLQPGDTLLFLGPLEQGGIILKQWCTTSCVFGDPGDIMSTTSGMRCPEHTGSFRKICGFATTPTCEYQGNTVSGFQRMMATRDSFQSFNVTEPHITSNRLEWIDPDSSIKDHINMVLNRDVSFQDLSDNPCKVDLHTQSIDGAWGSGVGFTLVCTVGLTECANFITSIKACDSAMCYGATVTNLLRGSNTVKVVGKGGHSGSLFKCCHDTDCTEEGLAASPPHLDRVTGYNQIDSDKVYDDGAPPCTIKCWFTKSGEWLLGILNGNWVVVAVLIVILILSILLFSFFCPVRSRKNKAN</sequence>
<proteinExistence type="inferred from homology"/>